<reference key="1">
    <citation type="journal article" date="2007" name="Science">
        <title>Legumes symbioses: absence of nod genes in photosynthetic bradyrhizobia.</title>
        <authorList>
            <person name="Giraud E."/>
            <person name="Moulin L."/>
            <person name="Vallenet D."/>
            <person name="Barbe V."/>
            <person name="Cytryn E."/>
            <person name="Avarre J.-C."/>
            <person name="Jaubert M."/>
            <person name="Simon D."/>
            <person name="Cartieaux F."/>
            <person name="Prin Y."/>
            <person name="Bena G."/>
            <person name="Hannibal L."/>
            <person name="Fardoux J."/>
            <person name="Kojadinovic M."/>
            <person name="Vuillet L."/>
            <person name="Lajus A."/>
            <person name="Cruveiller S."/>
            <person name="Rouy Z."/>
            <person name="Mangenot S."/>
            <person name="Segurens B."/>
            <person name="Dossat C."/>
            <person name="Franck W.L."/>
            <person name="Chang W.-S."/>
            <person name="Saunders E."/>
            <person name="Bruce D."/>
            <person name="Richardson P."/>
            <person name="Normand P."/>
            <person name="Dreyfus B."/>
            <person name="Pignol D."/>
            <person name="Stacey G."/>
            <person name="Emerich D."/>
            <person name="Vermeglio A."/>
            <person name="Medigue C."/>
            <person name="Sadowsky M."/>
        </authorList>
    </citation>
    <scope>NUCLEOTIDE SEQUENCE [LARGE SCALE GENOMIC DNA]</scope>
    <source>
        <strain>BTAi1 / ATCC BAA-1182</strain>
    </source>
</reference>
<accession>A5ED21</accession>
<sequence length="834" mass="93602">MTDMKIDRRQMLKLEAAAIAAAAAGMPSTSLAANLVTEREASELKWDKAACRFCGTGCSVMVATKDNRVVATHGDIKAEVNRGLNCVKGYFLSKIMYGHDRLTHPMLRKTNGKYDKNGEFTPVSWDEAFDIMALKFKDALKKRGPSGVGMFGSGQWTIWEGYAASKLFKAGFRTNNIDPNARHCMASAVAGMMRTFGIDEPAGCYDDIEAADAFVLWGSNMAEMHPILWTRVTDRRLSAPHVKVAVLSTFEHRSFDLADIGMVFKPQTDLYLLNAIANHIIKTGRVNKDFVQAHTVFKKGQTDIGYGLRPEHPLQKKATGAAKANDATDISFDEYAKFVSDYTLEKAAEMSGVPLNRLEALAELYADPKTKVVSFWTMGFNQHTRGVWCNNLVYNIHLLTGKIAEAGNSPFSLTGQPSACGTAREVGTFSHRLPADMVVTNKEHRTKAEHIWQLPEGTIPDKPGYHAVLQSRMLKDGLLNAYWVQVNNNLQAGPNANEETYPGFRNPDNFIVVSDAYPSVTALAADLILPTAMWVEKEGAYGNAERRTQFWHQLVSAPGEARSDLWQLMEFSKRFKIEEVWPEELIAKKPDVRGKTLFDVLYKNGQVDKFPLDQIEAGYANDESKAFGFYVHKGLFEEYAAFGRGHGHDLAPFEAYHKERGLRWPVVDGKETRWRFREGSDPYVKAGTGVQFYGFPDGKARIFALPYEPPAESPDKDYPFWLSTGRVVEHWHSGTMTRRVPELYKAFPEAVCFMHPDDAQEANLRRGDEVKVASRRGFIRARVETRGRDKPPRGLVFVPWFDESKLINKVTLDATDPISLQTDYKKCAVRIERV</sequence>
<comment type="function">
    <text evidence="1">Catalytic subunit of the periplasmic nitrate reductase complex NapAB. Receives electrons from NapB and catalyzes the reduction of nitrate to nitrite.</text>
</comment>
<comment type="catalytic activity">
    <reaction evidence="1">
        <text>2 Fe(II)-[cytochrome] + nitrate + 2 H(+) = 2 Fe(III)-[cytochrome] + nitrite + H2O</text>
        <dbReference type="Rhea" id="RHEA:12909"/>
        <dbReference type="Rhea" id="RHEA-COMP:11777"/>
        <dbReference type="Rhea" id="RHEA-COMP:11778"/>
        <dbReference type="ChEBI" id="CHEBI:15377"/>
        <dbReference type="ChEBI" id="CHEBI:15378"/>
        <dbReference type="ChEBI" id="CHEBI:16301"/>
        <dbReference type="ChEBI" id="CHEBI:17632"/>
        <dbReference type="ChEBI" id="CHEBI:29033"/>
        <dbReference type="ChEBI" id="CHEBI:29034"/>
        <dbReference type="EC" id="1.9.6.1"/>
    </reaction>
</comment>
<comment type="cofactor">
    <cofactor evidence="1">
        <name>[4Fe-4S] cluster</name>
        <dbReference type="ChEBI" id="CHEBI:49883"/>
    </cofactor>
    <text evidence="1">Binds 1 [4Fe-4S] cluster.</text>
</comment>
<comment type="cofactor">
    <cofactor evidence="1">
        <name>Mo-bis(molybdopterin guanine dinucleotide)</name>
        <dbReference type="ChEBI" id="CHEBI:60539"/>
    </cofactor>
    <text evidence="1">Binds 1 molybdenum-bis(molybdopterin guanine dinucleotide) (Mo-bis-MGD) cofactor per subunit.</text>
</comment>
<comment type="subunit">
    <text evidence="1">Component of the periplasmic nitrate reductase NapAB complex composed of NapA and NapB.</text>
</comment>
<comment type="subcellular location">
    <subcellularLocation>
        <location evidence="1">Periplasm</location>
    </subcellularLocation>
</comment>
<comment type="PTM">
    <text evidence="1">Predicted to be exported by the Tat system. The position of the signal peptide cleavage has not been experimentally proven.</text>
</comment>
<comment type="similarity">
    <text evidence="1">Belongs to the prokaryotic molybdopterin-containing oxidoreductase family. NasA/NapA/NarB subfamily.</text>
</comment>
<organism>
    <name type="scientific">Bradyrhizobium sp. (strain BTAi1 / ATCC BAA-1182)</name>
    <dbReference type="NCBI Taxonomy" id="288000"/>
    <lineage>
        <taxon>Bacteria</taxon>
        <taxon>Pseudomonadati</taxon>
        <taxon>Pseudomonadota</taxon>
        <taxon>Alphaproteobacteria</taxon>
        <taxon>Hyphomicrobiales</taxon>
        <taxon>Nitrobacteraceae</taxon>
        <taxon>Bradyrhizobium</taxon>
    </lineage>
</organism>
<keyword id="KW-0004">4Fe-4S</keyword>
<keyword id="KW-0249">Electron transport</keyword>
<keyword id="KW-0408">Iron</keyword>
<keyword id="KW-0411">Iron-sulfur</keyword>
<keyword id="KW-0479">Metal-binding</keyword>
<keyword id="KW-0500">Molybdenum</keyword>
<keyword id="KW-0534">Nitrate assimilation</keyword>
<keyword id="KW-0560">Oxidoreductase</keyword>
<keyword id="KW-0574">Periplasm</keyword>
<keyword id="KW-1185">Reference proteome</keyword>
<keyword id="KW-0732">Signal</keyword>
<keyword id="KW-0813">Transport</keyword>
<feature type="signal peptide" description="Tat-type signal" evidence="1">
    <location>
        <begin position="1"/>
        <end position="32"/>
    </location>
</feature>
<feature type="chain" id="PRO_1000069709" description="Periplasmic nitrate reductase" evidence="1">
    <location>
        <begin position="33"/>
        <end position="834"/>
    </location>
</feature>
<feature type="domain" description="4Fe-4S Mo/W bis-MGD-type" evidence="1">
    <location>
        <begin position="44"/>
        <end position="100"/>
    </location>
</feature>
<feature type="binding site" evidence="1">
    <location>
        <position position="51"/>
    </location>
    <ligand>
        <name>[4Fe-4S] cluster</name>
        <dbReference type="ChEBI" id="CHEBI:49883"/>
    </ligand>
</feature>
<feature type="binding site" evidence="1">
    <location>
        <position position="54"/>
    </location>
    <ligand>
        <name>[4Fe-4S] cluster</name>
        <dbReference type="ChEBI" id="CHEBI:49883"/>
    </ligand>
</feature>
<feature type="binding site" evidence="1">
    <location>
        <position position="58"/>
    </location>
    <ligand>
        <name>[4Fe-4S] cluster</name>
        <dbReference type="ChEBI" id="CHEBI:49883"/>
    </ligand>
</feature>
<feature type="binding site" evidence="1">
    <location>
        <position position="86"/>
    </location>
    <ligand>
        <name>[4Fe-4S] cluster</name>
        <dbReference type="ChEBI" id="CHEBI:49883"/>
    </ligand>
</feature>
<feature type="binding site" evidence="1">
    <location>
        <position position="88"/>
    </location>
    <ligand>
        <name>Mo-bis(molybdopterin guanine dinucleotide)</name>
        <dbReference type="ChEBI" id="CHEBI:60539"/>
    </ligand>
</feature>
<feature type="binding site" evidence="1">
    <location>
        <position position="155"/>
    </location>
    <ligand>
        <name>Mo-bis(molybdopterin guanine dinucleotide)</name>
        <dbReference type="ChEBI" id="CHEBI:60539"/>
    </ligand>
</feature>
<feature type="binding site" evidence="1">
    <location>
        <position position="180"/>
    </location>
    <ligand>
        <name>Mo-bis(molybdopterin guanine dinucleotide)</name>
        <dbReference type="ChEBI" id="CHEBI:60539"/>
    </ligand>
</feature>
<feature type="binding site" evidence="1">
    <location>
        <position position="184"/>
    </location>
    <ligand>
        <name>Mo-bis(molybdopterin guanine dinucleotide)</name>
        <dbReference type="ChEBI" id="CHEBI:60539"/>
    </ligand>
</feature>
<feature type="binding site" evidence="1">
    <location>
        <begin position="217"/>
        <end position="224"/>
    </location>
    <ligand>
        <name>Mo-bis(molybdopterin guanine dinucleotide)</name>
        <dbReference type="ChEBI" id="CHEBI:60539"/>
    </ligand>
</feature>
<feature type="binding site" evidence="1">
    <location>
        <begin position="248"/>
        <end position="252"/>
    </location>
    <ligand>
        <name>Mo-bis(molybdopterin guanine dinucleotide)</name>
        <dbReference type="ChEBI" id="CHEBI:60539"/>
    </ligand>
</feature>
<feature type="binding site" evidence="1">
    <location>
        <begin position="267"/>
        <end position="269"/>
    </location>
    <ligand>
        <name>Mo-bis(molybdopterin guanine dinucleotide)</name>
        <dbReference type="ChEBI" id="CHEBI:60539"/>
    </ligand>
</feature>
<feature type="binding site" evidence="1">
    <location>
        <position position="378"/>
    </location>
    <ligand>
        <name>Mo-bis(molybdopterin guanine dinucleotide)</name>
        <dbReference type="ChEBI" id="CHEBI:60539"/>
    </ligand>
</feature>
<feature type="binding site" evidence="1">
    <location>
        <position position="382"/>
    </location>
    <ligand>
        <name>Mo-bis(molybdopterin guanine dinucleotide)</name>
        <dbReference type="ChEBI" id="CHEBI:60539"/>
    </ligand>
</feature>
<feature type="binding site" evidence="1">
    <location>
        <position position="488"/>
    </location>
    <ligand>
        <name>Mo-bis(molybdopterin guanine dinucleotide)</name>
        <dbReference type="ChEBI" id="CHEBI:60539"/>
    </ligand>
</feature>
<feature type="binding site" evidence="1">
    <location>
        <begin position="514"/>
        <end position="515"/>
    </location>
    <ligand>
        <name>Mo-bis(molybdopterin guanine dinucleotide)</name>
        <dbReference type="ChEBI" id="CHEBI:60539"/>
    </ligand>
</feature>
<feature type="binding site" evidence="1">
    <location>
        <position position="537"/>
    </location>
    <ligand>
        <name>Mo-bis(molybdopterin guanine dinucleotide)</name>
        <dbReference type="ChEBI" id="CHEBI:60539"/>
    </ligand>
</feature>
<feature type="binding site" evidence="1">
    <location>
        <position position="564"/>
    </location>
    <ligand>
        <name>Mo-bis(molybdopterin guanine dinucleotide)</name>
        <dbReference type="ChEBI" id="CHEBI:60539"/>
    </ligand>
</feature>
<feature type="binding site" evidence="1">
    <location>
        <begin position="724"/>
        <end position="733"/>
    </location>
    <ligand>
        <name>Mo-bis(molybdopterin guanine dinucleotide)</name>
        <dbReference type="ChEBI" id="CHEBI:60539"/>
    </ligand>
</feature>
<feature type="binding site" evidence="1">
    <location>
        <position position="800"/>
    </location>
    <ligand>
        <name>substrate</name>
    </ligand>
</feature>
<feature type="binding site" evidence="1">
    <location>
        <position position="808"/>
    </location>
    <ligand>
        <name>Mo-bis(molybdopterin guanine dinucleotide)</name>
        <dbReference type="ChEBI" id="CHEBI:60539"/>
    </ligand>
</feature>
<feature type="binding site" evidence="1">
    <location>
        <position position="825"/>
    </location>
    <ligand>
        <name>Mo-bis(molybdopterin guanine dinucleotide)</name>
        <dbReference type="ChEBI" id="CHEBI:60539"/>
    </ligand>
</feature>
<evidence type="ECO:0000255" key="1">
    <source>
        <dbReference type="HAMAP-Rule" id="MF_01630"/>
    </source>
</evidence>
<protein>
    <recommendedName>
        <fullName evidence="1">Periplasmic nitrate reductase</fullName>
        <ecNumber evidence="1">1.9.6.1</ecNumber>
    </recommendedName>
</protein>
<name>NAPA_BRASB</name>
<proteinExistence type="inferred from homology"/>
<gene>
    <name evidence="1" type="primary">napA</name>
    <name type="ordered locus">BBta_1862</name>
</gene>
<dbReference type="EC" id="1.9.6.1" evidence="1"/>
<dbReference type="EMBL" id="CP000494">
    <property type="protein sequence ID" value="ABQ34065.1"/>
    <property type="molecule type" value="Genomic_DNA"/>
</dbReference>
<dbReference type="RefSeq" id="WP_012042095.1">
    <property type="nucleotide sequence ID" value="NC_009485.1"/>
</dbReference>
<dbReference type="SMR" id="A5ED21"/>
<dbReference type="STRING" id="288000.BBta_1862"/>
<dbReference type="KEGG" id="bbt:BBta_1862"/>
<dbReference type="eggNOG" id="COG0243">
    <property type="taxonomic scope" value="Bacteria"/>
</dbReference>
<dbReference type="HOGENOM" id="CLU_000422_13_4_5"/>
<dbReference type="OrthoDB" id="9816402at2"/>
<dbReference type="Proteomes" id="UP000000246">
    <property type="component" value="Chromosome"/>
</dbReference>
<dbReference type="GO" id="GO:0016020">
    <property type="term" value="C:membrane"/>
    <property type="evidence" value="ECO:0007669"/>
    <property type="project" value="TreeGrafter"/>
</dbReference>
<dbReference type="GO" id="GO:0009325">
    <property type="term" value="C:nitrate reductase complex"/>
    <property type="evidence" value="ECO:0007669"/>
    <property type="project" value="TreeGrafter"/>
</dbReference>
<dbReference type="GO" id="GO:0042597">
    <property type="term" value="C:periplasmic space"/>
    <property type="evidence" value="ECO:0007669"/>
    <property type="project" value="UniProtKB-SubCell"/>
</dbReference>
<dbReference type="GO" id="GO:0051539">
    <property type="term" value="F:4 iron, 4 sulfur cluster binding"/>
    <property type="evidence" value="ECO:0007669"/>
    <property type="project" value="UniProtKB-KW"/>
</dbReference>
<dbReference type="GO" id="GO:0009055">
    <property type="term" value="F:electron transfer activity"/>
    <property type="evidence" value="ECO:0007669"/>
    <property type="project" value="UniProtKB-UniRule"/>
</dbReference>
<dbReference type="GO" id="GO:0005506">
    <property type="term" value="F:iron ion binding"/>
    <property type="evidence" value="ECO:0007669"/>
    <property type="project" value="UniProtKB-UniRule"/>
</dbReference>
<dbReference type="GO" id="GO:0030151">
    <property type="term" value="F:molybdenum ion binding"/>
    <property type="evidence" value="ECO:0007669"/>
    <property type="project" value="InterPro"/>
</dbReference>
<dbReference type="GO" id="GO:0043546">
    <property type="term" value="F:molybdopterin cofactor binding"/>
    <property type="evidence" value="ECO:0007669"/>
    <property type="project" value="InterPro"/>
</dbReference>
<dbReference type="GO" id="GO:0050140">
    <property type="term" value="F:nitrate reductase (cytochrome) activity"/>
    <property type="evidence" value="ECO:0007669"/>
    <property type="project" value="UniProtKB-EC"/>
</dbReference>
<dbReference type="GO" id="GO:0045333">
    <property type="term" value="P:cellular respiration"/>
    <property type="evidence" value="ECO:0007669"/>
    <property type="project" value="UniProtKB-ARBA"/>
</dbReference>
<dbReference type="GO" id="GO:0006777">
    <property type="term" value="P:Mo-molybdopterin cofactor biosynthetic process"/>
    <property type="evidence" value="ECO:0007669"/>
    <property type="project" value="UniProtKB-UniRule"/>
</dbReference>
<dbReference type="GO" id="GO:0042128">
    <property type="term" value="P:nitrate assimilation"/>
    <property type="evidence" value="ECO:0007669"/>
    <property type="project" value="UniProtKB-UniRule"/>
</dbReference>
<dbReference type="CDD" id="cd02791">
    <property type="entry name" value="MopB_CT_Nitrate-R-NapA-like"/>
    <property type="match status" value="1"/>
</dbReference>
<dbReference type="CDD" id="cd02754">
    <property type="entry name" value="MopB_Nitrate-R-NapA-like"/>
    <property type="match status" value="1"/>
</dbReference>
<dbReference type="FunFam" id="2.40.40.20:FF:000005">
    <property type="entry name" value="Periplasmic nitrate reductase"/>
    <property type="match status" value="1"/>
</dbReference>
<dbReference type="Gene3D" id="2.40.40.20">
    <property type="match status" value="1"/>
</dbReference>
<dbReference type="Gene3D" id="3.30.200.210">
    <property type="match status" value="1"/>
</dbReference>
<dbReference type="Gene3D" id="3.40.50.740">
    <property type="match status" value="1"/>
</dbReference>
<dbReference type="Gene3D" id="3.40.228.10">
    <property type="entry name" value="Dimethylsulfoxide Reductase, domain 2"/>
    <property type="match status" value="1"/>
</dbReference>
<dbReference type="HAMAP" id="MF_01630">
    <property type="entry name" value="Nitrate_reduct_NapA"/>
    <property type="match status" value="1"/>
</dbReference>
<dbReference type="InterPro" id="IPR009010">
    <property type="entry name" value="Asp_de-COase-like_dom_sf"/>
</dbReference>
<dbReference type="InterPro" id="IPR041957">
    <property type="entry name" value="CT_Nitrate-R-NapA-like"/>
</dbReference>
<dbReference type="InterPro" id="IPR006657">
    <property type="entry name" value="MoPterin_dinucl-bd_dom"/>
</dbReference>
<dbReference type="InterPro" id="IPR006656">
    <property type="entry name" value="Mopterin_OxRdtase"/>
</dbReference>
<dbReference type="InterPro" id="IPR006963">
    <property type="entry name" value="Mopterin_OxRdtase_4Fe-4S_dom"/>
</dbReference>
<dbReference type="InterPro" id="IPR027467">
    <property type="entry name" value="MopterinOxRdtase_cofactor_BS"/>
</dbReference>
<dbReference type="InterPro" id="IPR010051">
    <property type="entry name" value="Periplasm_NO3_reductase_lsu"/>
</dbReference>
<dbReference type="InterPro" id="IPR050123">
    <property type="entry name" value="Prok_molybdopt-oxidoreductase"/>
</dbReference>
<dbReference type="InterPro" id="IPR006311">
    <property type="entry name" value="TAT_signal"/>
</dbReference>
<dbReference type="NCBIfam" id="TIGR01706">
    <property type="entry name" value="NAPA"/>
    <property type="match status" value="1"/>
</dbReference>
<dbReference type="NCBIfam" id="NF010055">
    <property type="entry name" value="PRK13532.1"/>
    <property type="match status" value="1"/>
</dbReference>
<dbReference type="PANTHER" id="PTHR43105:SF11">
    <property type="entry name" value="PERIPLASMIC NITRATE REDUCTASE"/>
    <property type="match status" value="1"/>
</dbReference>
<dbReference type="PANTHER" id="PTHR43105">
    <property type="entry name" value="RESPIRATORY NITRATE REDUCTASE"/>
    <property type="match status" value="1"/>
</dbReference>
<dbReference type="Pfam" id="PF04879">
    <property type="entry name" value="Molybdop_Fe4S4"/>
    <property type="match status" value="1"/>
</dbReference>
<dbReference type="Pfam" id="PF00384">
    <property type="entry name" value="Molybdopterin"/>
    <property type="match status" value="1"/>
</dbReference>
<dbReference type="Pfam" id="PF01568">
    <property type="entry name" value="Molydop_binding"/>
    <property type="match status" value="1"/>
</dbReference>
<dbReference type="SMART" id="SM00926">
    <property type="entry name" value="Molybdop_Fe4S4"/>
    <property type="match status" value="1"/>
</dbReference>
<dbReference type="SUPFAM" id="SSF50692">
    <property type="entry name" value="ADC-like"/>
    <property type="match status" value="1"/>
</dbReference>
<dbReference type="SUPFAM" id="SSF53706">
    <property type="entry name" value="Formate dehydrogenase/DMSO reductase, domains 1-3"/>
    <property type="match status" value="1"/>
</dbReference>
<dbReference type="PROSITE" id="PS51669">
    <property type="entry name" value="4FE4S_MOW_BIS_MGD"/>
    <property type="match status" value="1"/>
</dbReference>
<dbReference type="PROSITE" id="PS00551">
    <property type="entry name" value="MOLYBDOPTERIN_PROK_1"/>
    <property type="match status" value="1"/>
</dbReference>
<dbReference type="PROSITE" id="PS51318">
    <property type="entry name" value="TAT"/>
    <property type="match status" value="1"/>
</dbReference>